<name>KIF15_HUMAN</name>
<sequence length="1388" mass="160160">MAPGCKTELRSVTNGQSNQPSNEGDAIKVFVRIRPPAERSGSADGEQNLCLSVLSSTSLRLHSNPEPKTFTFDHVADVDTTQESVFATVAKSIVESCMSGYNGTIFAYGQTGSGKTFTMMGPSESDNFSHNLRGVIPRSFEYLFSLIDREKEKAGAGKSFLCKCSFIEIYNEQIYDLLDSASAGLYLREHIKKGVFVVGAVEQVVTSAAEAYQVLSGGWRNRRVASTSMNRESSRSHAVFTITIESMEKSNEIVNIRTSLLNLVDLAGSERQKDTHAEGMRLKEAGNINRSLSCLGQVITALVDVGNGKQRHVCYRDSKLTFLLRDSLGGNAKTAIIANVHPGSRCFGETLSTLNFAQRAKLIKNKAVVNEDTQGNVSQLQAEVKRLKEQLAELASGQTPPESFLTRDKKKTNYMEYFQEAMLFFKKSEQEKKSLIEKVTQLEDLTLKKEKFIQSNKMIVKFREDQIIRLEKLHKESRGGFLPEEQDRLLSELRNEIQTLREQIEHHPRVAKYAMENHSLREENRRLRLLEPVKRAQEMDAQTIAKLEKAFSEISGMEKSDKNQQGFSPKAQKEPCLFANTEKLKAQLLQIQTELNNSKQEYEEFKELTRKRQLELESELQSLQKANLNLENLLEATKACKRQEVSQLNKIHAETLKIITTPTKAYQLHSRPVPKLSPEMGSFGSLYTQNSSILDNDILNEPVPPEMNEQAFEAISEELRTVQEQMSALQAKLDEEEHKNLKLQQHVDKLEHHSTQMQELFSSERIDWTKQQEELLSQLNVLEKQLQETQTKNDFLKSEVHDLRVVLHSADKELSSVKLEYSSFKTNQEKEFNKLSERHMHVQLQLDNLRLENEKLLESKACLQDSYDNLQEIMKFEIDQLSRNLQNFKKENETLKSDLNNLMELLEAEKERNNKLSLQFEEDKENSSKEILKVLEAVRQEKQKETAKCEQQMAKVQKLEESLLATEKVISSLEKSRDSDKKVVADLMNQIQELRTSVCEKTETIDTLKQELKDINCKYNSALVDREESRVLIKKQEVDILDLKETLRLRILSEDIERDMLCEDLAHATEQLNMLTEASKKHSGLLQSAQEELTKKEALIQELQHKLNQKKEEVEQKKNEYNFKMRQLEHVMDSAAEDPQSPKTPPHFQTHLAKLLETQEQEIEDGRASKTSLEHLVTKLNEDREVKNAEILRMKEQLREMENLRLESQQLIEKNWLLQGQLDDIKRQKENSDQNHPDNQQLKNEQEESIKERLAKSKIVEEMLKMKADLEEVQSALYNKEMECLRMTDEVERTQTLESKAFQEKEQLRSKLEEMYEERERTSQEMEMLRKQVECLAEENGKLVGHQNLHQKIQYVVRLKKENVRLAEETEKLRAENVFLKEKKRSES</sequence>
<feature type="chain" id="PRO_0000328684" description="Kinesin-like protein KIF15">
    <location>
        <begin position="1"/>
        <end position="1388"/>
    </location>
</feature>
<feature type="domain" description="Kinesin motor" evidence="3">
    <location>
        <begin position="26"/>
        <end position="363"/>
    </location>
</feature>
<feature type="region of interest" description="Disordered" evidence="4">
    <location>
        <begin position="1"/>
        <end position="25"/>
    </location>
</feature>
<feature type="region of interest" description="Disordered" evidence="4">
    <location>
        <begin position="1228"/>
        <end position="1250"/>
    </location>
</feature>
<feature type="coiled-coil region" evidence="2">
    <location>
        <begin position="368"/>
        <end position="1388"/>
    </location>
</feature>
<feature type="compositionally biased region" description="Polar residues" evidence="4">
    <location>
        <begin position="10"/>
        <end position="22"/>
    </location>
</feature>
<feature type="binding site" evidence="3">
    <location>
        <begin position="109"/>
        <end position="116"/>
    </location>
    <ligand>
        <name>ATP</name>
        <dbReference type="ChEBI" id="CHEBI:30616"/>
    </ligand>
</feature>
<feature type="modified residue" description="Phosphothreonine" evidence="17">
    <location>
        <position position="399"/>
    </location>
</feature>
<feature type="modified residue" description="Phosphoserine" evidence="14">
    <location>
        <position position="568"/>
    </location>
</feature>
<feature type="modified residue" description="N6-acetyllysine" evidence="15">
    <location>
        <position position="1009"/>
    </location>
</feature>
<feature type="modified residue" description="Phosphoserine" evidence="17">
    <location>
        <position position="1141"/>
    </location>
</feature>
<feature type="modified residue" description="Phosphoserine" evidence="16">
    <location>
        <position position="1169"/>
    </location>
</feature>
<feature type="splice variant" id="VSP_032752" description="In isoform 3." evidence="11">
    <location>
        <begin position="1"/>
        <end position="952"/>
    </location>
</feature>
<feature type="splice variant" id="VSP_032753" description="In isoform 2." evidence="12">
    <location>
        <begin position="1"/>
        <end position="97"/>
    </location>
</feature>
<feature type="splice variant" id="VSP_032754" description="In isoform 4." evidence="10">
    <original>ELTKKEALIQELQHKLNQKKEEVEQKKN</original>
    <variation>RTDQERSPDSGTSAQAKPKERGSRTEEE</variation>
    <location>
        <begin position="1092"/>
        <end position="1119"/>
    </location>
</feature>
<feature type="splice variant" id="VSP_032755" description="In isoform 4." evidence="10">
    <location>
        <begin position="1200"/>
        <end position="1388"/>
    </location>
</feature>
<feature type="sequence variant" id="VAR_042464" description="In dbSNP:rs34862960.">
    <original>A</original>
    <variation>V</variation>
    <location>
        <position position="211"/>
    </location>
</feature>
<feature type="sequence variant" id="VAR_087453" description="In BRDCS2; uncertain significance; dbSNP:rs1002572191." evidence="9">
    <location>
        <begin position="501"/>
        <end position="1388"/>
    </location>
</feature>
<feature type="sequence variant" id="VAR_042465" description="In dbSNP:rs11710339." evidence="7 8">
    <original>T</original>
    <variation>S</variation>
    <location>
        <position position="996"/>
    </location>
</feature>
<feature type="sequence variant" id="VAR_042466" description="In dbSNP:rs3804583.">
    <original>L</original>
    <variation>M</variation>
    <location>
        <position position="1206"/>
    </location>
</feature>
<feature type="sequence variant" id="VAR_042467" description="In dbSNP:rs17076986.">
    <original>E</original>
    <variation>D</variation>
    <location>
        <position position="1272"/>
    </location>
</feature>
<feature type="sequence conflict" description="In Ref. 5; AAG48261." evidence="13" ref="5">
    <original>E</original>
    <variation>K</variation>
    <location>
        <position position="1057"/>
    </location>
</feature>
<feature type="strand" evidence="18">
    <location>
        <begin position="28"/>
        <end position="33"/>
    </location>
</feature>
<feature type="strand" evidence="18">
    <location>
        <begin position="50"/>
        <end position="55"/>
    </location>
</feature>
<feature type="strand" evidence="18">
    <location>
        <begin position="58"/>
        <end position="61"/>
    </location>
</feature>
<feature type="strand" evidence="18">
    <location>
        <begin position="64"/>
        <end position="66"/>
    </location>
</feature>
<feature type="strand" evidence="18">
    <location>
        <begin position="68"/>
        <end position="71"/>
    </location>
</feature>
<feature type="strand" evidence="18">
    <location>
        <begin position="73"/>
        <end position="76"/>
    </location>
</feature>
<feature type="helix" evidence="18">
    <location>
        <begin position="82"/>
        <end position="98"/>
    </location>
</feature>
<feature type="strand" evidence="18">
    <location>
        <begin position="103"/>
        <end position="108"/>
    </location>
</feature>
<feature type="helix" evidence="18">
    <location>
        <begin position="115"/>
        <end position="119"/>
    </location>
</feature>
<feature type="helix" evidence="18">
    <location>
        <begin position="135"/>
        <end position="150"/>
    </location>
</feature>
<feature type="strand" evidence="18">
    <location>
        <begin position="158"/>
        <end position="172"/>
    </location>
</feature>
<feature type="strand" evidence="18">
    <location>
        <begin position="174"/>
        <end position="176"/>
    </location>
</feature>
<feature type="strand" evidence="18">
    <location>
        <begin position="186"/>
        <end position="189"/>
    </location>
</feature>
<feature type="strand" evidence="18">
    <location>
        <begin position="195"/>
        <end position="198"/>
    </location>
</feature>
<feature type="helix" evidence="18">
    <location>
        <begin position="208"/>
        <end position="226"/>
    </location>
</feature>
<feature type="strand" evidence="18">
    <location>
        <begin position="228"/>
        <end position="231"/>
    </location>
</feature>
<feature type="strand" evidence="18">
    <location>
        <begin position="236"/>
        <end position="250"/>
    </location>
</feature>
<feature type="strand" evidence="18">
    <location>
        <begin position="253"/>
        <end position="265"/>
    </location>
</feature>
<feature type="helix" evidence="18">
    <location>
        <begin position="290"/>
        <end position="306"/>
    </location>
</feature>
<feature type="strand" evidence="18">
    <location>
        <begin position="307"/>
        <end position="309"/>
    </location>
</feature>
<feature type="helix" evidence="18">
    <location>
        <begin position="315"/>
        <end position="317"/>
    </location>
</feature>
<feature type="helix" evidence="18">
    <location>
        <begin position="319"/>
        <end position="323"/>
    </location>
</feature>
<feature type="helix" evidence="18">
    <location>
        <begin position="325"/>
        <end position="327"/>
    </location>
</feature>
<feature type="strand" evidence="18">
    <location>
        <begin position="330"/>
        <end position="340"/>
    </location>
</feature>
<feature type="helix" evidence="18">
    <location>
        <begin position="344"/>
        <end position="346"/>
    </location>
</feature>
<feature type="helix" evidence="18">
    <location>
        <begin position="347"/>
        <end position="360"/>
    </location>
</feature>
<accession>Q9NS87</accession>
<accession>Q17RV9</accession>
<accession>Q69YL6</accession>
<accession>Q96JX7</accession>
<accession>Q9H280</accession>
<comment type="function">
    <text evidence="1">Plus-end directed kinesin-like motor enzyme involved in mitotic spindle assembly.</text>
</comment>
<comment type="subunit">
    <text evidence="5 6">Interacts with MKI67 and TPX2.</text>
</comment>
<comment type="interaction">
    <interactant intactId="EBI-712159">
        <id>Q9NS87</id>
    </interactant>
    <interactant intactId="EBI-876367">
        <id>P46013</id>
        <label>MKI67</label>
    </interactant>
    <organismsDiffer>false</organismsDiffer>
    <experiments>3</experiments>
</comment>
<comment type="subcellular location">
    <subcellularLocation>
        <location>Cytoplasm</location>
    </subcellularLocation>
    <subcellularLocation>
        <location>Cytoplasm</location>
        <location>Cytoskeleton</location>
        <location>Spindle</location>
    </subcellularLocation>
    <text evidence="1">Detected during the interphase in the cytoplasm as finely punctuate pattern and irregularly shaped dots. Detected during mitosis on the mitotic spindle. Colocalizes with TPX2 in mitosis. Localizes at the central spindle at anaphase (By similarity). Localizes at the sites of invaginating cell membranes, a position that corresponds to the location of the contractile actomyosin ring of dividing cells (By similarity). Colocalizes with actin in interphase (By similarity). Colocalizes in dendrites and in growth cone of axons with microtubules (By similarity).</text>
</comment>
<comment type="alternative products">
    <event type="alternative splicing"/>
    <isoform>
        <id>Q9NS87-1</id>
        <name>1</name>
        <sequence type="displayed"/>
    </isoform>
    <isoform>
        <id>Q9NS87-2</id>
        <name>2</name>
        <sequence type="described" ref="VSP_032753"/>
    </isoform>
    <isoform>
        <id>Q9NS87-3</id>
        <name>3</name>
        <sequence type="described" ref="VSP_032752"/>
    </isoform>
    <isoform>
        <id>Q9NS87-4</id>
        <name>4</name>
        <sequence type="described" ref="VSP_032754 VSP_032755"/>
    </isoform>
</comment>
<comment type="tissue specificity">
    <text evidence="7">Expressed in testis, colon, thymus and in breast cancer.</text>
</comment>
<comment type="disease" evidence="9">
    <disease id="DI-06453">
        <name>Braddock-Carey syndrome 2</name>
        <acronym>BRDCS2</acronym>
        <description>An autosomal recessive disease characterized by microcephaly, congenital thrombocytopenia, and facial dysmorphisms including Pierre-Robin sequence.</description>
        <dbReference type="MIM" id="619981"/>
    </disease>
    <text>The disease may be caused by variants affecting the gene represented in this entry.</text>
</comment>
<comment type="similarity">
    <text evidence="3">Belongs to the TRAFAC class myosin-kinesin ATPase superfamily. Kinesin family. KLP2 subfamily.</text>
</comment>
<comment type="sequence caution" evidence="13">
    <conflict type="frameshift">
        <sequence resource="EMBL-CDS" id="AAG48261"/>
    </conflict>
</comment>
<evidence type="ECO:0000250" key="1"/>
<evidence type="ECO:0000255" key="2"/>
<evidence type="ECO:0000255" key="3">
    <source>
        <dbReference type="PROSITE-ProRule" id="PRU00283"/>
    </source>
</evidence>
<evidence type="ECO:0000256" key="4">
    <source>
        <dbReference type="SAM" id="MobiDB-lite"/>
    </source>
</evidence>
<evidence type="ECO:0000269" key="5">
    <source>
    </source>
</evidence>
<evidence type="ECO:0000269" key="6">
    <source>
    </source>
</evidence>
<evidence type="ECO:0000269" key="7">
    <source>
    </source>
</evidence>
<evidence type="ECO:0000269" key="8">
    <source>
    </source>
</evidence>
<evidence type="ECO:0000269" key="9">
    <source>
    </source>
</evidence>
<evidence type="ECO:0000303" key="10">
    <source>
    </source>
</evidence>
<evidence type="ECO:0000303" key="11">
    <source>
    </source>
</evidence>
<evidence type="ECO:0000303" key="12">
    <source>
    </source>
</evidence>
<evidence type="ECO:0000305" key="13"/>
<evidence type="ECO:0007744" key="14">
    <source>
    </source>
</evidence>
<evidence type="ECO:0007744" key="15">
    <source>
    </source>
</evidence>
<evidence type="ECO:0007744" key="16">
    <source>
    </source>
</evidence>
<evidence type="ECO:0007744" key="17">
    <source>
    </source>
</evidence>
<evidence type="ECO:0007829" key="18">
    <source>
        <dbReference type="PDB" id="4BN2"/>
    </source>
</evidence>
<dbReference type="EMBL" id="AB035898">
    <property type="protein sequence ID" value="BAB03309.1"/>
    <property type="molecule type" value="mRNA"/>
</dbReference>
<dbReference type="EMBL" id="AK027816">
    <property type="protein sequence ID" value="BAB55389.1"/>
    <property type="molecule type" value="mRNA"/>
</dbReference>
<dbReference type="EMBL" id="BC117174">
    <property type="protein sequence ID" value="AAI17175.1"/>
    <property type="molecule type" value="mRNA"/>
</dbReference>
<dbReference type="EMBL" id="AL832908">
    <property type="protein sequence ID" value="CAH10635.1"/>
    <property type="molecule type" value="mRNA"/>
</dbReference>
<dbReference type="EMBL" id="AF308294">
    <property type="protein sequence ID" value="AAG48261.1"/>
    <property type="status" value="ALT_FRAME"/>
    <property type="molecule type" value="mRNA"/>
</dbReference>
<dbReference type="CCDS" id="CCDS33744.1">
    <molecule id="Q9NS87-1"/>
</dbReference>
<dbReference type="RefSeq" id="NP_064627.1">
    <molecule id="Q9NS87-1"/>
    <property type="nucleotide sequence ID" value="NM_020242.3"/>
</dbReference>
<dbReference type="PDB" id="4BN2">
    <property type="method" value="X-ray"/>
    <property type="resolution" value="2.70 A"/>
    <property type="chains" value="A/B/C=19-375"/>
</dbReference>
<dbReference type="PDB" id="6ZPH">
    <property type="method" value="EM"/>
    <property type="resolution" value="6.90 A"/>
    <property type="chains" value="B=1-374"/>
</dbReference>
<dbReference type="PDB" id="6ZPI">
    <property type="method" value="EM"/>
    <property type="resolution" value="4.50 A"/>
    <property type="chains" value="C=1-374"/>
</dbReference>
<dbReference type="PDB" id="7RYP">
    <property type="method" value="EM"/>
    <property type="resolution" value="4.80 A"/>
    <property type="chains" value="A=1-375"/>
</dbReference>
<dbReference type="PDBsum" id="4BN2"/>
<dbReference type="PDBsum" id="6ZPH"/>
<dbReference type="PDBsum" id="6ZPI"/>
<dbReference type="PDBsum" id="7RYP"/>
<dbReference type="EMDB" id="EMD-11339"/>
<dbReference type="EMDB" id="EMD-11340"/>
<dbReference type="EMDB" id="EMD-24744"/>
<dbReference type="SMR" id="Q9NS87"/>
<dbReference type="BioGRID" id="121307">
    <property type="interactions" value="92"/>
</dbReference>
<dbReference type="DIP" id="DIP-28133N"/>
<dbReference type="FunCoup" id="Q9NS87">
    <property type="interactions" value="486"/>
</dbReference>
<dbReference type="IntAct" id="Q9NS87">
    <property type="interactions" value="34"/>
</dbReference>
<dbReference type="MINT" id="Q9NS87"/>
<dbReference type="STRING" id="9606.ENSP00000324020"/>
<dbReference type="BindingDB" id="Q9NS87"/>
<dbReference type="ChEMBL" id="CHEMBL3632454"/>
<dbReference type="CarbonylDB" id="Q9NS87"/>
<dbReference type="GlyGen" id="Q9NS87">
    <property type="glycosylation" value="3 sites, 2 N-linked glycans (2 sites), 1 O-linked glycan (1 site)"/>
</dbReference>
<dbReference type="iPTMnet" id="Q9NS87"/>
<dbReference type="MetOSite" id="Q9NS87"/>
<dbReference type="PhosphoSitePlus" id="Q9NS87"/>
<dbReference type="BioMuta" id="KIF15"/>
<dbReference type="DMDM" id="74752937"/>
<dbReference type="jPOST" id="Q9NS87"/>
<dbReference type="MassIVE" id="Q9NS87"/>
<dbReference type="PaxDb" id="9606-ENSP00000324020"/>
<dbReference type="PeptideAtlas" id="Q9NS87"/>
<dbReference type="ProteomicsDB" id="82511">
    <molecule id="Q9NS87-1"/>
</dbReference>
<dbReference type="ProteomicsDB" id="82512">
    <molecule id="Q9NS87-2"/>
</dbReference>
<dbReference type="ProteomicsDB" id="82513">
    <molecule id="Q9NS87-3"/>
</dbReference>
<dbReference type="ProteomicsDB" id="82514">
    <molecule id="Q9NS87-4"/>
</dbReference>
<dbReference type="Pumba" id="Q9NS87"/>
<dbReference type="Antibodypedia" id="29484">
    <property type="antibodies" value="197 antibodies from 25 providers"/>
</dbReference>
<dbReference type="DNASU" id="56992"/>
<dbReference type="Ensembl" id="ENST00000326047.9">
    <molecule id="Q9NS87-1"/>
    <property type="protein sequence ID" value="ENSP00000324020.4"/>
    <property type="gene ID" value="ENSG00000163808.17"/>
</dbReference>
<dbReference type="Ensembl" id="ENST00000627272.3">
    <molecule id="Q9NS87-1"/>
    <property type="protein sequence ID" value="ENSP00000486004.1"/>
    <property type="gene ID" value="ENSG00000280610.3"/>
</dbReference>
<dbReference type="GeneID" id="56992"/>
<dbReference type="KEGG" id="hsa:56992"/>
<dbReference type="MANE-Select" id="ENST00000326047.9">
    <property type="protein sequence ID" value="ENSP00000324020.4"/>
    <property type="RefSeq nucleotide sequence ID" value="NM_020242.3"/>
    <property type="RefSeq protein sequence ID" value="NP_064627.1"/>
</dbReference>
<dbReference type="UCSC" id="uc003cnx.5">
    <molecule id="Q9NS87-1"/>
    <property type="organism name" value="human"/>
</dbReference>
<dbReference type="AGR" id="HGNC:17273"/>
<dbReference type="CTD" id="56992"/>
<dbReference type="DisGeNET" id="56992"/>
<dbReference type="GeneCards" id="KIF15"/>
<dbReference type="HGNC" id="HGNC:17273">
    <property type="gene designation" value="KIF15"/>
</dbReference>
<dbReference type="HPA" id="ENSG00000163808">
    <property type="expression patterns" value="Group enriched (bone marrow, lymphoid tissue, testis)"/>
</dbReference>
<dbReference type="MalaCards" id="KIF15"/>
<dbReference type="MIM" id="617569">
    <property type="type" value="gene"/>
</dbReference>
<dbReference type="MIM" id="619981">
    <property type="type" value="phenotype"/>
</dbReference>
<dbReference type="neXtProt" id="NX_Q9NS87"/>
<dbReference type="OpenTargets" id="ENSG00000163808"/>
<dbReference type="Orphanet" id="261323">
    <property type="disease" value="21q22.11q22.12 microdeletion syndrome"/>
</dbReference>
<dbReference type="PharmGKB" id="PA30183"/>
<dbReference type="VEuPathDB" id="HostDB:ENSG00000163808"/>
<dbReference type="eggNOG" id="KOG4280">
    <property type="taxonomic scope" value="Eukaryota"/>
</dbReference>
<dbReference type="GeneTree" id="ENSGT00940000156463"/>
<dbReference type="HOGENOM" id="CLU_005295_0_0_1"/>
<dbReference type="InParanoid" id="Q9NS87"/>
<dbReference type="OMA" id="CVKKEKF"/>
<dbReference type="OrthoDB" id="3176171at2759"/>
<dbReference type="PAN-GO" id="Q9NS87">
    <property type="GO annotations" value="6 GO annotations based on evolutionary models"/>
</dbReference>
<dbReference type="PhylomeDB" id="Q9NS87"/>
<dbReference type="TreeFam" id="TF320478"/>
<dbReference type="PathwayCommons" id="Q9NS87"/>
<dbReference type="Reactome" id="R-HSA-2132295">
    <property type="pathway name" value="MHC class II antigen presentation"/>
</dbReference>
<dbReference type="Reactome" id="R-HSA-6811434">
    <property type="pathway name" value="COPI-dependent Golgi-to-ER retrograde traffic"/>
</dbReference>
<dbReference type="Reactome" id="R-HSA-983189">
    <property type="pathway name" value="Kinesins"/>
</dbReference>
<dbReference type="SignaLink" id="Q9NS87"/>
<dbReference type="BioGRID-ORCS" id="56992">
    <property type="hits" value="61 hits in 1159 CRISPR screens"/>
</dbReference>
<dbReference type="CD-CODE" id="8C2F96ED">
    <property type="entry name" value="Centrosome"/>
</dbReference>
<dbReference type="ChiTaRS" id="KIF15">
    <property type="organism name" value="human"/>
</dbReference>
<dbReference type="EvolutionaryTrace" id="Q9NS87"/>
<dbReference type="GeneWiki" id="KIF15"/>
<dbReference type="GenomeRNAi" id="56992"/>
<dbReference type="Pharos" id="Q9NS87">
    <property type="development level" value="Tchem"/>
</dbReference>
<dbReference type="PRO" id="PR:Q9NS87"/>
<dbReference type="Proteomes" id="UP000005640">
    <property type="component" value="Chromosome 3"/>
</dbReference>
<dbReference type="RNAct" id="Q9NS87">
    <property type="molecule type" value="protein"/>
</dbReference>
<dbReference type="Bgee" id="ENSG00000163808">
    <property type="expression patterns" value="Expressed in ventricular zone and 103 other cell types or tissues"/>
</dbReference>
<dbReference type="ExpressionAtlas" id="Q9NS87">
    <property type="expression patterns" value="baseline and differential"/>
</dbReference>
<dbReference type="GO" id="GO:0005813">
    <property type="term" value="C:centrosome"/>
    <property type="evidence" value="ECO:0000304"/>
    <property type="project" value="ProtInc"/>
</dbReference>
<dbReference type="GO" id="GO:0005737">
    <property type="term" value="C:cytoplasm"/>
    <property type="evidence" value="ECO:0000318"/>
    <property type="project" value="GO_Central"/>
</dbReference>
<dbReference type="GO" id="GO:0005829">
    <property type="term" value="C:cytosol"/>
    <property type="evidence" value="ECO:0000304"/>
    <property type="project" value="Reactome"/>
</dbReference>
<dbReference type="GO" id="GO:0005871">
    <property type="term" value="C:kinesin complex"/>
    <property type="evidence" value="ECO:0000318"/>
    <property type="project" value="GO_Central"/>
</dbReference>
<dbReference type="GO" id="GO:0016020">
    <property type="term" value="C:membrane"/>
    <property type="evidence" value="ECO:0007005"/>
    <property type="project" value="UniProtKB"/>
</dbReference>
<dbReference type="GO" id="GO:0005874">
    <property type="term" value="C:microtubule"/>
    <property type="evidence" value="ECO:0000318"/>
    <property type="project" value="GO_Central"/>
</dbReference>
<dbReference type="GO" id="GO:0005873">
    <property type="term" value="C:plus-end kinesin complex"/>
    <property type="evidence" value="ECO:0000304"/>
    <property type="project" value="ProtInc"/>
</dbReference>
<dbReference type="GO" id="GO:0000922">
    <property type="term" value="C:spindle pole"/>
    <property type="evidence" value="ECO:0000250"/>
    <property type="project" value="UniProtKB"/>
</dbReference>
<dbReference type="GO" id="GO:0005524">
    <property type="term" value="F:ATP binding"/>
    <property type="evidence" value="ECO:0007669"/>
    <property type="project" value="UniProtKB-KW"/>
</dbReference>
<dbReference type="GO" id="GO:0016887">
    <property type="term" value="F:ATP hydrolysis activity"/>
    <property type="evidence" value="ECO:0000318"/>
    <property type="project" value="GO_Central"/>
</dbReference>
<dbReference type="GO" id="GO:0003774">
    <property type="term" value="F:cytoskeletal motor activity"/>
    <property type="evidence" value="ECO:0000304"/>
    <property type="project" value="ProtInc"/>
</dbReference>
<dbReference type="GO" id="GO:0008017">
    <property type="term" value="F:microtubule binding"/>
    <property type="evidence" value="ECO:0000318"/>
    <property type="project" value="GO_Central"/>
</dbReference>
<dbReference type="GO" id="GO:0003777">
    <property type="term" value="F:microtubule motor activity"/>
    <property type="evidence" value="ECO:0000318"/>
    <property type="project" value="GO_Central"/>
</dbReference>
<dbReference type="GO" id="GO:0008574">
    <property type="term" value="F:plus-end-directed microtubule motor activity"/>
    <property type="evidence" value="ECO:0000250"/>
    <property type="project" value="UniProtKB"/>
</dbReference>
<dbReference type="GO" id="GO:0051299">
    <property type="term" value="P:centrosome separation"/>
    <property type="evidence" value="ECO:0000250"/>
    <property type="project" value="UniProtKB"/>
</dbReference>
<dbReference type="GO" id="GO:0007018">
    <property type="term" value="P:microtubule-based movement"/>
    <property type="evidence" value="ECO:0000318"/>
    <property type="project" value="GO_Central"/>
</dbReference>
<dbReference type="GO" id="GO:0000278">
    <property type="term" value="P:mitotic cell cycle"/>
    <property type="evidence" value="ECO:0000304"/>
    <property type="project" value="ProtInc"/>
</dbReference>
<dbReference type="GO" id="GO:0090307">
    <property type="term" value="P:mitotic spindle assembly"/>
    <property type="evidence" value="ECO:0000250"/>
    <property type="project" value="UniProtKB"/>
</dbReference>
<dbReference type="CDD" id="cd01373">
    <property type="entry name" value="KISc_KLP2_like"/>
    <property type="match status" value="1"/>
</dbReference>
<dbReference type="FunFam" id="3.40.850.10:FF:000034">
    <property type="entry name" value="Kinesin family member 15"/>
    <property type="match status" value="1"/>
</dbReference>
<dbReference type="Gene3D" id="3.40.850.10">
    <property type="entry name" value="Kinesin motor domain"/>
    <property type="match status" value="1"/>
</dbReference>
<dbReference type="InterPro" id="IPR031794">
    <property type="entry name" value="HMMR_C"/>
</dbReference>
<dbReference type="InterPro" id="IPR044986">
    <property type="entry name" value="KIF15/KIN-12"/>
</dbReference>
<dbReference type="InterPro" id="IPR001752">
    <property type="entry name" value="Kinesin_motor_dom"/>
</dbReference>
<dbReference type="InterPro" id="IPR036961">
    <property type="entry name" value="Kinesin_motor_dom_sf"/>
</dbReference>
<dbReference type="InterPro" id="IPR027417">
    <property type="entry name" value="P-loop_NTPase"/>
</dbReference>
<dbReference type="PANTHER" id="PTHR37739">
    <property type="entry name" value="KINESIN-LIKE PROTEIN KIN-12D"/>
    <property type="match status" value="1"/>
</dbReference>
<dbReference type="PANTHER" id="PTHR37739:SF8">
    <property type="entry name" value="KINESIN-LIKE PROTEIN KIN-12D"/>
    <property type="match status" value="1"/>
</dbReference>
<dbReference type="Pfam" id="PF15908">
    <property type="entry name" value="HMMR_C"/>
    <property type="match status" value="1"/>
</dbReference>
<dbReference type="Pfam" id="PF00225">
    <property type="entry name" value="Kinesin"/>
    <property type="match status" value="1"/>
</dbReference>
<dbReference type="PRINTS" id="PR00380">
    <property type="entry name" value="KINESINHEAVY"/>
</dbReference>
<dbReference type="SMART" id="SM00129">
    <property type="entry name" value="KISc"/>
    <property type="match status" value="1"/>
</dbReference>
<dbReference type="SUPFAM" id="SSF52540">
    <property type="entry name" value="P-loop containing nucleoside triphosphate hydrolases"/>
    <property type="match status" value="1"/>
</dbReference>
<dbReference type="PROSITE" id="PS50067">
    <property type="entry name" value="KINESIN_MOTOR_2"/>
    <property type="match status" value="1"/>
</dbReference>
<organism>
    <name type="scientific">Homo sapiens</name>
    <name type="common">Human</name>
    <dbReference type="NCBI Taxonomy" id="9606"/>
    <lineage>
        <taxon>Eukaryota</taxon>
        <taxon>Metazoa</taxon>
        <taxon>Chordata</taxon>
        <taxon>Craniata</taxon>
        <taxon>Vertebrata</taxon>
        <taxon>Euteleostomi</taxon>
        <taxon>Mammalia</taxon>
        <taxon>Eutheria</taxon>
        <taxon>Euarchontoglires</taxon>
        <taxon>Primates</taxon>
        <taxon>Haplorrhini</taxon>
        <taxon>Catarrhini</taxon>
        <taxon>Hominidae</taxon>
        <taxon>Homo</taxon>
    </lineage>
</organism>
<reference key="1">
    <citation type="journal article" date="2000" name="J. Biol. Chem.">
        <title>The forkhead-associated domain of Ki-67 antigen interacts with the novel kinesin-like protein Hklp2.</title>
        <authorList>
            <person name="Sueishi M."/>
            <person name="Takagi M."/>
            <person name="Yoneda Y."/>
        </authorList>
    </citation>
    <scope>NUCLEOTIDE SEQUENCE [MRNA] (ISOFORM 1)</scope>
    <scope>INTERACTION WITH MKI67</scope>
    <scope>SUBCELLULAR LOCATION</scope>
</reference>
<reference key="2">
    <citation type="journal article" date="2004" name="Nat. Genet.">
        <title>Complete sequencing and characterization of 21,243 full-length human cDNAs.</title>
        <authorList>
            <person name="Ota T."/>
            <person name="Suzuki Y."/>
            <person name="Nishikawa T."/>
            <person name="Otsuki T."/>
            <person name="Sugiyama T."/>
            <person name="Irie R."/>
            <person name="Wakamatsu A."/>
            <person name="Hayashi K."/>
            <person name="Sato H."/>
            <person name="Nagai K."/>
            <person name="Kimura K."/>
            <person name="Makita H."/>
            <person name="Sekine M."/>
            <person name="Obayashi M."/>
            <person name="Nishi T."/>
            <person name="Shibahara T."/>
            <person name="Tanaka T."/>
            <person name="Ishii S."/>
            <person name="Yamamoto J."/>
            <person name="Saito K."/>
            <person name="Kawai Y."/>
            <person name="Isono Y."/>
            <person name="Nakamura Y."/>
            <person name="Nagahari K."/>
            <person name="Murakami K."/>
            <person name="Yasuda T."/>
            <person name="Iwayanagi T."/>
            <person name="Wagatsuma M."/>
            <person name="Shiratori A."/>
            <person name="Sudo H."/>
            <person name="Hosoiri T."/>
            <person name="Kaku Y."/>
            <person name="Kodaira H."/>
            <person name="Kondo H."/>
            <person name="Sugawara M."/>
            <person name="Takahashi M."/>
            <person name="Kanda K."/>
            <person name="Yokoi T."/>
            <person name="Furuya T."/>
            <person name="Kikkawa E."/>
            <person name="Omura Y."/>
            <person name="Abe K."/>
            <person name="Kamihara K."/>
            <person name="Katsuta N."/>
            <person name="Sato K."/>
            <person name="Tanikawa M."/>
            <person name="Yamazaki M."/>
            <person name="Ninomiya K."/>
            <person name="Ishibashi T."/>
            <person name="Yamashita H."/>
            <person name="Murakawa K."/>
            <person name="Fujimori K."/>
            <person name="Tanai H."/>
            <person name="Kimata M."/>
            <person name="Watanabe M."/>
            <person name="Hiraoka S."/>
            <person name="Chiba Y."/>
            <person name="Ishida S."/>
            <person name="Ono Y."/>
            <person name="Takiguchi S."/>
            <person name="Watanabe S."/>
            <person name="Yosida M."/>
            <person name="Hotuta T."/>
            <person name="Kusano J."/>
            <person name="Kanehori K."/>
            <person name="Takahashi-Fujii A."/>
            <person name="Hara H."/>
            <person name="Tanase T.-O."/>
            <person name="Nomura Y."/>
            <person name="Togiya S."/>
            <person name="Komai F."/>
            <person name="Hara R."/>
            <person name="Takeuchi K."/>
            <person name="Arita M."/>
            <person name="Imose N."/>
            <person name="Musashino K."/>
            <person name="Yuuki H."/>
            <person name="Oshima A."/>
            <person name="Sasaki N."/>
            <person name="Aotsuka S."/>
            <person name="Yoshikawa Y."/>
            <person name="Matsunawa H."/>
            <person name="Ichihara T."/>
            <person name="Shiohata N."/>
            <person name="Sano S."/>
            <person name="Moriya S."/>
            <person name="Momiyama H."/>
            <person name="Satoh N."/>
            <person name="Takami S."/>
            <person name="Terashima Y."/>
            <person name="Suzuki O."/>
            <person name="Nakagawa S."/>
            <person name="Senoh A."/>
            <person name="Mizoguchi H."/>
            <person name="Goto Y."/>
            <person name="Shimizu F."/>
            <person name="Wakebe H."/>
            <person name="Hishigaki H."/>
            <person name="Watanabe T."/>
            <person name="Sugiyama A."/>
            <person name="Takemoto M."/>
            <person name="Kawakami B."/>
            <person name="Yamazaki M."/>
            <person name="Watanabe K."/>
            <person name="Kumagai A."/>
            <person name="Itakura S."/>
            <person name="Fukuzumi Y."/>
            <person name="Fujimori Y."/>
            <person name="Komiyama M."/>
            <person name="Tashiro H."/>
            <person name="Tanigami A."/>
            <person name="Fujiwara T."/>
            <person name="Ono T."/>
            <person name="Yamada K."/>
            <person name="Fujii Y."/>
            <person name="Ozaki K."/>
            <person name="Hirao M."/>
            <person name="Ohmori Y."/>
            <person name="Kawabata A."/>
            <person name="Hikiji T."/>
            <person name="Kobatake N."/>
            <person name="Inagaki H."/>
            <person name="Ikema Y."/>
            <person name="Okamoto S."/>
            <person name="Okitani R."/>
            <person name="Kawakami T."/>
            <person name="Noguchi S."/>
            <person name="Itoh T."/>
            <person name="Shigeta K."/>
            <person name="Senba T."/>
            <person name="Matsumura K."/>
            <person name="Nakajima Y."/>
            <person name="Mizuno T."/>
            <person name="Morinaga M."/>
            <person name="Sasaki M."/>
            <person name="Togashi T."/>
            <person name="Oyama M."/>
            <person name="Hata H."/>
            <person name="Watanabe M."/>
            <person name="Komatsu T."/>
            <person name="Mizushima-Sugano J."/>
            <person name="Satoh T."/>
            <person name="Shirai Y."/>
            <person name="Takahashi Y."/>
            <person name="Nakagawa K."/>
            <person name="Okumura K."/>
            <person name="Nagase T."/>
            <person name="Nomura N."/>
            <person name="Kikuchi H."/>
            <person name="Masuho Y."/>
            <person name="Yamashita R."/>
            <person name="Nakai K."/>
            <person name="Yada T."/>
            <person name="Nakamura Y."/>
            <person name="Ohara O."/>
            <person name="Isogai T."/>
            <person name="Sugano S."/>
        </authorList>
    </citation>
    <scope>NUCLEOTIDE SEQUENCE [LARGE SCALE MRNA] (ISOFORM 3)</scope>
    <source>
        <tissue>Placenta</tissue>
    </source>
</reference>
<reference key="3">
    <citation type="journal article" date="2004" name="Genome Res.">
        <title>The status, quality, and expansion of the NIH full-length cDNA project: the Mammalian Gene Collection (MGC).</title>
        <authorList>
            <consortium name="The MGC Project Team"/>
        </authorList>
    </citation>
    <scope>NUCLEOTIDE SEQUENCE [LARGE SCALE MRNA] (ISOFORM 2)</scope>
    <source>
        <tissue>Cerebellum</tissue>
    </source>
</reference>
<reference key="4">
    <citation type="journal article" date="2007" name="BMC Genomics">
        <title>The full-ORF clone resource of the German cDNA consortium.</title>
        <authorList>
            <person name="Bechtel S."/>
            <person name="Rosenfelder H."/>
            <person name="Duda A."/>
            <person name="Schmidt C.P."/>
            <person name="Ernst U."/>
            <person name="Wellenreuther R."/>
            <person name="Mehrle A."/>
            <person name="Schuster C."/>
            <person name="Bahr A."/>
            <person name="Bloecker H."/>
            <person name="Heubner D."/>
            <person name="Hoerlein A."/>
            <person name="Michel G."/>
            <person name="Wedler H."/>
            <person name="Koehrer K."/>
            <person name="Ottenwaelder B."/>
            <person name="Poustka A."/>
            <person name="Wiemann S."/>
            <person name="Schupp I."/>
        </authorList>
    </citation>
    <scope>NUCLEOTIDE SEQUENCE [LARGE SCALE MRNA] OF 339-1388 (ISOFORMS 1/2)</scope>
    <scope>VARIANT SER-996</scope>
    <source>
        <tissue>Melanoma</tissue>
    </source>
</reference>
<reference key="5">
    <citation type="journal article" date="2001" name="Cancer Immun.">
        <title>Humoral immunity to human breast cancer: antigen definition and quantitative analysis of mRNA expression.</title>
        <authorList>
            <person name="Scanlan M.J."/>
            <person name="Gout I."/>
            <person name="Gordon C.M."/>
            <person name="Williamson B."/>
            <person name="Stockert E."/>
            <person name="Gure A.O."/>
            <person name="Jaeger D."/>
            <person name="Chen Y.-T."/>
            <person name="Mackay A."/>
            <person name="O'Hare M.J."/>
            <person name="Old L.J."/>
        </authorList>
    </citation>
    <scope>NUCLEOTIDE SEQUENCE [MRNA] OF 786-1388 (ISOFORM 4)</scope>
    <scope>TISSUE SPECIFICITY</scope>
    <scope>VARIANT SER-996</scope>
    <source>
        <tissue>Mammary gland</tissue>
    </source>
</reference>
<reference key="6">
    <citation type="journal article" date="2003" name="Mol. Cancer Res.">
        <title>repp86: a human protein associated in the progression of mitosis.</title>
        <authorList>
            <person name="Heidebrecht H.-J."/>
            <person name="Adam-Klages S."/>
            <person name="Szczepanowski M."/>
            <person name="Pollmann M."/>
            <person name="Buck F."/>
            <person name="Endl E."/>
            <person name="Kruse M.-L."/>
            <person name="Rudolph P."/>
            <person name="Parwaresch R."/>
        </authorList>
    </citation>
    <scope>INTERACTION WITH TPX2</scope>
    <scope>SUBCELLULAR LOCATION</scope>
</reference>
<reference key="7">
    <citation type="journal article" date="2008" name="Proc. Natl. Acad. Sci. U.S.A.">
        <title>A quantitative atlas of mitotic phosphorylation.</title>
        <authorList>
            <person name="Dephoure N."/>
            <person name="Zhou C."/>
            <person name="Villen J."/>
            <person name="Beausoleil S.A."/>
            <person name="Bakalarski C.E."/>
            <person name="Elledge S.J."/>
            <person name="Gygi S.P."/>
        </authorList>
    </citation>
    <scope>PHOSPHORYLATION [LARGE SCALE ANALYSIS] AT SER-568</scope>
    <scope>IDENTIFICATION BY MASS SPECTROMETRY [LARGE SCALE ANALYSIS]</scope>
    <source>
        <tissue>Cervix carcinoma</tissue>
    </source>
</reference>
<reference key="8">
    <citation type="journal article" date="2009" name="Science">
        <title>Lysine acetylation targets protein complexes and co-regulates major cellular functions.</title>
        <authorList>
            <person name="Choudhary C."/>
            <person name="Kumar C."/>
            <person name="Gnad F."/>
            <person name="Nielsen M.L."/>
            <person name="Rehman M."/>
            <person name="Walther T.C."/>
            <person name="Olsen J.V."/>
            <person name="Mann M."/>
        </authorList>
    </citation>
    <scope>ACETYLATION [LARGE SCALE ANALYSIS] AT LYS-1009</scope>
    <scope>IDENTIFICATION BY MASS SPECTROMETRY [LARGE SCALE ANALYSIS]</scope>
</reference>
<reference key="9">
    <citation type="journal article" date="2010" name="Sci. Signal.">
        <title>Quantitative phosphoproteomics reveals widespread full phosphorylation site occupancy during mitosis.</title>
        <authorList>
            <person name="Olsen J.V."/>
            <person name="Vermeulen M."/>
            <person name="Santamaria A."/>
            <person name="Kumar C."/>
            <person name="Miller M.L."/>
            <person name="Jensen L.J."/>
            <person name="Gnad F."/>
            <person name="Cox J."/>
            <person name="Jensen T.S."/>
            <person name="Nigg E.A."/>
            <person name="Brunak S."/>
            <person name="Mann M."/>
        </authorList>
    </citation>
    <scope>PHOSPHORYLATION [LARGE SCALE ANALYSIS] AT SER-1169</scope>
    <scope>IDENTIFICATION BY MASS SPECTROMETRY [LARGE SCALE ANALYSIS]</scope>
    <source>
        <tissue>Cervix carcinoma</tissue>
    </source>
</reference>
<reference key="10">
    <citation type="journal article" date="2011" name="BMC Syst. Biol.">
        <title>Initial characterization of the human central proteome.</title>
        <authorList>
            <person name="Burkard T.R."/>
            <person name="Planyavsky M."/>
            <person name="Kaupe I."/>
            <person name="Breitwieser F.P."/>
            <person name="Buerckstuemmer T."/>
            <person name="Bennett K.L."/>
            <person name="Superti-Furga G."/>
            <person name="Colinge J."/>
        </authorList>
    </citation>
    <scope>IDENTIFICATION BY MASS SPECTROMETRY [LARGE SCALE ANALYSIS]</scope>
</reference>
<reference key="11">
    <citation type="journal article" date="2013" name="J. Proteome Res.">
        <title>Toward a comprehensive characterization of a human cancer cell phosphoproteome.</title>
        <authorList>
            <person name="Zhou H."/>
            <person name="Di Palma S."/>
            <person name="Preisinger C."/>
            <person name="Peng M."/>
            <person name="Polat A.N."/>
            <person name="Heck A.J."/>
            <person name="Mohammed S."/>
        </authorList>
    </citation>
    <scope>PHOSPHORYLATION [LARGE SCALE ANALYSIS] AT THR-399 AND SER-1141</scope>
    <scope>IDENTIFICATION BY MASS SPECTROMETRY [LARGE SCALE ANALYSIS]</scope>
    <source>
        <tissue>Cervix carcinoma</tissue>
        <tissue>Erythroleukemia</tissue>
    </source>
</reference>
<reference key="12">
    <citation type="journal article" date="2017" name="Hum. Mutat.">
        <title>Loss-of-Function Mutations in KIF15 Underlying a Braddock-Carey Genocopy.</title>
        <authorList>
            <person name="Sleiman P.M.A."/>
            <person name="March M."/>
            <person name="Nguyen K."/>
            <person name="Tian L."/>
            <person name="Pellegrino R."/>
            <person name="Hou C."/>
            <person name="Dridi W."/>
            <person name="Sager M."/>
            <person name="Housawi Y.H."/>
            <person name="Hakonarson H."/>
        </authorList>
    </citation>
    <scope>INVOLVEMENT IN BRDCS2</scope>
    <scope>VARIANT BRDCS2 501-ARG--SER-1388 DEL</scope>
</reference>
<proteinExistence type="evidence at protein level"/>
<keyword id="KW-0002">3D-structure</keyword>
<keyword id="KW-0007">Acetylation</keyword>
<keyword id="KW-0025">Alternative splicing</keyword>
<keyword id="KW-0067">ATP-binding</keyword>
<keyword id="KW-0175">Coiled coil</keyword>
<keyword id="KW-0963">Cytoplasm</keyword>
<keyword id="KW-0206">Cytoskeleton</keyword>
<keyword id="KW-0493">Microtubule</keyword>
<keyword id="KW-0505">Motor protein</keyword>
<keyword id="KW-0547">Nucleotide-binding</keyword>
<keyword id="KW-0597">Phosphoprotein</keyword>
<keyword id="KW-1267">Proteomics identification</keyword>
<keyword id="KW-1185">Reference proteome</keyword>
<protein>
    <recommendedName>
        <fullName>Kinesin-like protein KIF15</fullName>
    </recommendedName>
    <alternativeName>
        <fullName>Kinesin-like protein 2</fullName>
        <shortName>hKLP2</shortName>
    </alternativeName>
    <alternativeName>
        <fullName>Kinesin-like protein 7</fullName>
    </alternativeName>
    <alternativeName>
        <fullName>Serologically defined breast cancer antigen NY-BR-62</fullName>
    </alternativeName>
</protein>
<gene>
    <name type="primary">KIF15</name>
    <name type="synonym">KLP2</name>
    <name type="synonym">KNSL7</name>
</gene>